<keyword id="KW-0007">Acetylation</keyword>
<keyword id="KW-0050">Antiport</keyword>
<keyword id="KW-0968">Cytoplasmic vesicle</keyword>
<keyword id="KW-0333">Golgi apparatus</keyword>
<keyword id="KW-0406">Ion transport</keyword>
<keyword id="KW-0472">Membrane</keyword>
<keyword id="KW-0479">Metal-binding</keyword>
<keyword id="KW-1185">Reference proteome</keyword>
<keyword id="KW-0812">Transmembrane</keyword>
<keyword id="KW-1133">Transmembrane helix</keyword>
<keyword id="KW-0813">Transport</keyword>
<keyword id="KW-0862">Zinc</keyword>
<keyword id="KW-0864">Zinc transport</keyword>
<proteinExistence type="evidence at protein level"/>
<organism>
    <name type="scientific">Mus musculus</name>
    <name type="common">Mouse</name>
    <dbReference type="NCBI Taxonomy" id="10090"/>
    <lineage>
        <taxon>Eukaryota</taxon>
        <taxon>Metazoa</taxon>
        <taxon>Chordata</taxon>
        <taxon>Craniata</taxon>
        <taxon>Vertebrata</taxon>
        <taxon>Euteleostomi</taxon>
        <taxon>Mammalia</taxon>
        <taxon>Eutheria</taxon>
        <taxon>Euarchontoglires</taxon>
        <taxon>Glires</taxon>
        <taxon>Rodentia</taxon>
        <taxon>Myomorpha</taxon>
        <taxon>Muroidea</taxon>
        <taxon>Muridae</taxon>
        <taxon>Murinae</taxon>
        <taxon>Mus</taxon>
        <taxon>Mus</taxon>
    </lineage>
</organism>
<sequence length="761" mass="83773">MEEKYGGDARPGPGGGLGPVDVPSARLTRYILLLCLTKCLKAVGLFESYDLLKAVHIVQFIFILKLGTAFFMVLFQKPFSSGKPITKHQWIKIFKHAVAGCIISLLWFFGLTLCGPLRTLLLFEHSDIVVISLLSVLFTSSGGGPAKTRGAAFFIIAVICLLLFDNDDLMAKMAEHPEGHHDSALTHMLYTAIAFLGVADHKGGVLLLVLALCCKVGFHTASRKLSIDVGGAKRLQALSQLVSVFLLCPWVIVLSVTTESKVESWFSLIMPFTTVIFFVMILDFYMDSVCSVKMDVSKCARYGSFPIFISALLFGNFWTHPITDQLRAMNRAAHQESTEHVLSGGVVVSAVFFILSANILSSPSKRGQKGTLIGYSPEGTPLYHFMGDAFQHSSQSVPRFIKDSLKQVLEESDSRQIFYFLCLNLLFTFVELFYGVLTNSLGLISDGFHMLFDCSALVMGLFAALMSRWKATRIFSYGYGRIEILSGFINGLFLIVIAFFVFMESVARLIDPPELDTNMLTPVSVGGLIVNLIGICAFSHAHSHGHGASQGNCHSDHGHSHHAHGHGHDHGHSHGFTGGGMNANMRGVFLHVLADTLGSIGVIVSTVLIEQFGWFIADPLCSLFIAVLIFLSVIPLIKDACQVLLLRLPPDHEKELHIALEKIQKIEGLISYRDPHFWRHSASIVAGTIHIQVTSEVLEQRIVQQVTGILKDAGVNNLTIQVEKEAYFQHMSGLSTGFHDVLAMTKQMESLKYCKDGTYIM</sequence>
<dbReference type="EMBL" id="AF461761">
    <property type="protein sequence ID" value="AAL96438.1"/>
    <property type="molecule type" value="mRNA"/>
</dbReference>
<dbReference type="EMBL" id="AK051183">
    <property type="protein sequence ID" value="BAC34549.1"/>
    <property type="status" value="ALT_INIT"/>
    <property type="molecule type" value="mRNA"/>
</dbReference>
<dbReference type="EMBL" id="AK166006">
    <property type="protein sequence ID" value="BAE38515.1"/>
    <property type="molecule type" value="mRNA"/>
</dbReference>
<dbReference type="EMBL" id="BC029033">
    <property type="protein sequence ID" value="AAH29033.3"/>
    <property type="molecule type" value="mRNA"/>
</dbReference>
<dbReference type="EMBL" id="BC033452">
    <property type="protein sequence ID" value="AAH33452.1"/>
    <property type="molecule type" value="mRNA"/>
</dbReference>
<dbReference type="CCDS" id="CCDS26739.1"/>
<dbReference type="RefSeq" id="NP_075023.2">
    <property type="nucleotide sequence ID" value="NM_022885.2"/>
</dbReference>
<dbReference type="SMR" id="Q8R4H9"/>
<dbReference type="BioGRID" id="213194">
    <property type="interactions" value="3"/>
</dbReference>
<dbReference type="FunCoup" id="Q8R4H9">
    <property type="interactions" value="2482"/>
</dbReference>
<dbReference type="STRING" id="10090.ENSMUSP00000065764"/>
<dbReference type="iPTMnet" id="Q8R4H9"/>
<dbReference type="PhosphoSitePlus" id="Q8R4H9"/>
<dbReference type="PaxDb" id="10090-ENSMUSP00000065764"/>
<dbReference type="PeptideAtlas" id="Q8R4H9"/>
<dbReference type="ProteomicsDB" id="275309"/>
<dbReference type="Pumba" id="Q8R4H9"/>
<dbReference type="Antibodypedia" id="23894">
    <property type="antibodies" value="48 antibodies from 13 providers"/>
</dbReference>
<dbReference type="DNASU" id="69048"/>
<dbReference type="Ensembl" id="ENSMUST00000067246.6">
    <property type="protein sequence ID" value="ENSMUSP00000065764.5"/>
    <property type="gene ID" value="ENSMUSG00000021629.11"/>
</dbReference>
<dbReference type="GeneID" id="69048"/>
<dbReference type="KEGG" id="mmu:69048"/>
<dbReference type="UCSC" id="uc007rrr.1">
    <property type="organism name" value="mouse"/>
</dbReference>
<dbReference type="AGR" id="MGI:1916298"/>
<dbReference type="CTD" id="64924"/>
<dbReference type="MGI" id="MGI:1916298">
    <property type="gene designation" value="Slc30a5"/>
</dbReference>
<dbReference type="VEuPathDB" id="HostDB:ENSMUSG00000021629"/>
<dbReference type="eggNOG" id="KOG1484">
    <property type="taxonomic scope" value="Eukaryota"/>
</dbReference>
<dbReference type="GeneTree" id="ENSGT00940000155754"/>
<dbReference type="HOGENOM" id="CLU_013430_11_0_1"/>
<dbReference type="InParanoid" id="Q8R4H9"/>
<dbReference type="OMA" id="NHLFYHF"/>
<dbReference type="OrthoDB" id="78669at2759"/>
<dbReference type="PhylomeDB" id="Q8R4H9"/>
<dbReference type="TreeFam" id="TF315217"/>
<dbReference type="Reactome" id="R-MMU-264876">
    <property type="pathway name" value="Insulin processing"/>
</dbReference>
<dbReference type="Reactome" id="R-MMU-435368">
    <property type="pathway name" value="Zinc efflux and compartmentalization by the SLC30 family"/>
</dbReference>
<dbReference type="BioGRID-ORCS" id="69048">
    <property type="hits" value="2 hits in 78 CRISPR screens"/>
</dbReference>
<dbReference type="ChiTaRS" id="Slc30a5">
    <property type="organism name" value="mouse"/>
</dbReference>
<dbReference type="PRO" id="PR:Q8R4H9"/>
<dbReference type="Proteomes" id="UP000000589">
    <property type="component" value="Chromosome 13"/>
</dbReference>
<dbReference type="RNAct" id="Q8R4H9">
    <property type="molecule type" value="protein"/>
</dbReference>
<dbReference type="Bgee" id="ENSMUSG00000021629">
    <property type="expression patterns" value="Expressed in choroid plexus epithelium and 264 other cell types or tissues"/>
</dbReference>
<dbReference type="ExpressionAtlas" id="Q8R4H9">
    <property type="expression patterns" value="baseline and differential"/>
</dbReference>
<dbReference type="GO" id="GO:0016324">
    <property type="term" value="C:apical plasma membrane"/>
    <property type="evidence" value="ECO:0000266"/>
    <property type="project" value="MGI"/>
</dbReference>
<dbReference type="GO" id="GO:0005789">
    <property type="term" value="C:endoplasmic reticulum membrane"/>
    <property type="evidence" value="ECO:0000250"/>
    <property type="project" value="UniProtKB"/>
</dbReference>
<dbReference type="GO" id="GO:0012507">
    <property type="term" value="C:ER to Golgi transport vesicle membrane"/>
    <property type="evidence" value="ECO:0000250"/>
    <property type="project" value="UniProtKB"/>
</dbReference>
<dbReference type="GO" id="GO:0005794">
    <property type="term" value="C:Golgi apparatus"/>
    <property type="evidence" value="ECO:0000250"/>
    <property type="project" value="UniProtKB"/>
</dbReference>
<dbReference type="GO" id="GO:1990674">
    <property type="term" value="C:Golgi cis cisterna membrane"/>
    <property type="evidence" value="ECO:0000250"/>
    <property type="project" value="UniProtKB"/>
</dbReference>
<dbReference type="GO" id="GO:0000139">
    <property type="term" value="C:Golgi membrane"/>
    <property type="evidence" value="ECO:0000250"/>
    <property type="project" value="UniProtKB"/>
</dbReference>
<dbReference type="GO" id="GO:0016020">
    <property type="term" value="C:membrane"/>
    <property type="evidence" value="ECO:0000266"/>
    <property type="project" value="MGI"/>
</dbReference>
<dbReference type="GO" id="GO:0005730">
    <property type="term" value="C:nucleolus"/>
    <property type="evidence" value="ECO:0007669"/>
    <property type="project" value="Ensembl"/>
</dbReference>
<dbReference type="GO" id="GO:0005654">
    <property type="term" value="C:nucleoplasm"/>
    <property type="evidence" value="ECO:0007669"/>
    <property type="project" value="Ensembl"/>
</dbReference>
<dbReference type="GO" id="GO:0030141">
    <property type="term" value="C:secretory granule"/>
    <property type="evidence" value="ECO:0000266"/>
    <property type="project" value="MGI"/>
</dbReference>
<dbReference type="GO" id="GO:0030667">
    <property type="term" value="C:secretory granule membrane"/>
    <property type="evidence" value="ECO:0000250"/>
    <property type="project" value="UniProtKB"/>
</dbReference>
<dbReference type="GO" id="GO:0032588">
    <property type="term" value="C:trans-Golgi network membrane"/>
    <property type="evidence" value="ECO:0000250"/>
    <property type="project" value="UniProtKB"/>
</dbReference>
<dbReference type="GO" id="GO:0046872">
    <property type="term" value="F:metal ion binding"/>
    <property type="evidence" value="ECO:0007669"/>
    <property type="project" value="UniProtKB-KW"/>
</dbReference>
<dbReference type="GO" id="GO:0005385">
    <property type="term" value="F:zinc ion transmembrane transporter activity"/>
    <property type="evidence" value="ECO:0000266"/>
    <property type="project" value="MGI"/>
</dbReference>
<dbReference type="GO" id="GO:0140826">
    <property type="term" value="F:zinc:proton antiporter activity"/>
    <property type="evidence" value="ECO:0000250"/>
    <property type="project" value="UniProtKB"/>
</dbReference>
<dbReference type="GO" id="GO:0006824">
    <property type="term" value="P:cobalt ion transport"/>
    <property type="evidence" value="ECO:0007669"/>
    <property type="project" value="Ensembl"/>
</dbReference>
<dbReference type="GO" id="GO:0006506">
    <property type="term" value="P:GPI anchor biosynthetic process"/>
    <property type="evidence" value="ECO:0000250"/>
    <property type="project" value="UniProtKB"/>
</dbReference>
<dbReference type="GO" id="GO:0030070">
    <property type="term" value="P:insulin processing"/>
    <property type="evidence" value="ECO:0000266"/>
    <property type="project" value="MGI"/>
</dbReference>
<dbReference type="GO" id="GO:0006882">
    <property type="term" value="P:intracellular zinc ion homeostasis"/>
    <property type="evidence" value="ECO:0007669"/>
    <property type="project" value="InterPro"/>
</dbReference>
<dbReference type="GO" id="GO:1904257">
    <property type="term" value="P:zinc ion import into Golgi lumen"/>
    <property type="evidence" value="ECO:0000250"/>
    <property type="project" value="UniProtKB"/>
</dbReference>
<dbReference type="GO" id="GO:0062111">
    <property type="term" value="P:zinc ion import into organelle"/>
    <property type="evidence" value="ECO:0000250"/>
    <property type="project" value="UniProtKB"/>
</dbReference>
<dbReference type="GO" id="GO:0006829">
    <property type="term" value="P:zinc ion transport"/>
    <property type="evidence" value="ECO:0000266"/>
    <property type="project" value="MGI"/>
</dbReference>
<dbReference type="Gene3D" id="1.20.1510.10">
    <property type="entry name" value="Cation efflux protein transmembrane domain"/>
    <property type="match status" value="1"/>
</dbReference>
<dbReference type="InterPro" id="IPR002524">
    <property type="entry name" value="Cation_efflux"/>
</dbReference>
<dbReference type="InterPro" id="IPR027469">
    <property type="entry name" value="Cation_efflux_TMD_sf"/>
</dbReference>
<dbReference type="InterPro" id="IPR045316">
    <property type="entry name" value="Msc2-like"/>
</dbReference>
<dbReference type="NCBIfam" id="TIGR01297">
    <property type="entry name" value="CDF"/>
    <property type="match status" value="1"/>
</dbReference>
<dbReference type="PANTHER" id="PTHR45755">
    <property type="match status" value="1"/>
</dbReference>
<dbReference type="PANTHER" id="PTHR45755:SF1">
    <property type="entry name" value="PROTON-COUPLED ZINC ANTIPORTER SLC30A5"/>
    <property type="match status" value="1"/>
</dbReference>
<dbReference type="Pfam" id="PF01545">
    <property type="entry name" value="Cation_efflux"/>
    <property type="match status" value="1"/>
</dbReference>
<dbReference type="SUPFAM" id="SSF161111">
    <property type="entry name" value="Cation efflux protein transmembrane domain-like"/>
    <property type="match status" value="1"/>
</dbReference>
<evidence type="ECO:0000250" key="1">
    <source>
        <dbReference type="UniProtKB" id="Q8IWU4"/>
    </source>
</evidence>
<evidence type="ECO:0000250" key="2">
    <source>
        <dbReference type="UniProtKB" id="Q8TAD4"/>
    </source>
</evidence>
<evidence type="ECO:0000255" key="3"/>
<evidence type="ECO:0000256" key="4">
    <source>
        <dbReference type="SAM" id="MobiDB-lite"/>
    </source>
</evidence>
<evidence type="ECO:0000269" key="5">
    <source>
    </source>
</evidence>
<evidence type="ECO:0000269" key="6">
    <source>
    </source>
</evidence>
<evidence type="ECO:0000303" key="7">
    <source>
    </source>
</evidence>
<evidence type="ECO:0000303" key="8">
    <source>
    </source>
</evidence>
<evidence type="ECO:0000305" key="9"/>
<evidence type="ECO:0000312" key="10">
    <source>
        <dbReference type="MGI" id="MGI:1916298"/>
    </source>
</evidence>
<reference key="1">
    <citation type="journal article" date="2002" name="J. Biol. Chem.">
        <title>Cloning and characterization of a novel mammalian zinc transporter, zinc transporter 5, abundantly expressed in pancreatic beta cells.</title>
        <authorList>
            <person name="Kambe T."/>
            <person name="Narita H."/>
            <person name="Yamaguchi-Iwai Y."/>
            <person name="Hirose J."/>
            <person name="Amano T."/>
            <person name="Sugiura N."/>
            <person name="Sasaki R."/>
            <person name="Mori K."/>
            <person name="Iwanaga T."/>
            <person name="Nagao M."/>
        </authorList>
    </citation>
    <scope>NUCLEOTIDE SEQUENCE [MRNA]</scope>
</reference>
<reference key="2">
    <citation type="journal article" date="2005" name="Science">
        <title>The transcriptional landscape of the mammalian genome.</title>
        <authorList>
            <person name="Carninci P."/>
            <person name="Kasukawa T."/>
            <person name="Katayama S."/>
            <person name="Gough J."/>
            <person name="Frith M.C."/>
            <person name="Maeda N."/>
            <person name="Oyama R."/>
            <person name="Ravasi T."/>
            <person name="Lenhard B."/>
            <person name="Wells C."/>
            <person name="Kodzius R."/>
            <person name="Shimokawa K."/>
            <person name="Bajic V.B."/>
            <person name="Brenner S.E."/>
            <person name="Batalov S."/>
            <person name="Forrest A.R."/>
            <person name="Zavolan M."/>
            <person name="Davis M.J."/>
            <person name="Wilming L.G."/>
            <person name="Aidinis V."/>
            <person name="Allen J.E."/>
            <person name="Ambesi-Impiombato A."/>
            <person name="Apweiler R."/>
            <person name="Aturaliya R.N."/>
            <person name="Bailey T.L."/>
            <person name="Bansal M."/>
            <person name="Baxter L."/>
            <person name="Beisel K.W."/>
            <person name="Bersano T."/>
            <person name="Bono H."/>
            <person name="Chalk A.M."/>
            <person name="Chiu K.P."/>
            <person name="Choudhary V."/>
            <person name="Christoffels A."/>
            <person name="Clutterbuck D.R."/>
            <person name="Crowe M.L."/>
            <person name="Dalla E."/>
            <person name="Dalrymple B.P."/>
            <person name="de Bono B."/>
            <person name="Della Gatta G."/>
            <person name="di Bernardo D."/>
            <person name="Down T."/>
            <person name="Engstrom P."/>
            <person name="Fagiolini M."/>
            <person name="Faulkner G."/>
            <person name="Fletcher C.F."/>
            <person name="Fukushima T."/>
            <person name="Furuno M."/>
            <person name="Futaki S."/>
            <person name="Gariboldi M."/>
            <person name="Georgii-Hemming P."/>
            <person name="Gingeras T.R."/>
            <person name="Gojobori T."/>
            <person name="Green R.E."/>
            <person name="Gustincich S."/>
            <person name="Harbers M."/>
            <person name="Hayashi Y."/>
            <person name="Hensch T.K."/>
            <person name="Hirokawa N."/>
            <person name="Hill D."/>
            <person name="Huminiecki L."/>
            <person name="Iacono M."/>
            <person name="Ikeo K."/>
            <person name="Iwama A."/>
            <person name="Ishikawa T."/>
            <person name="Jakt M."/>
            <person name="Kanapin A."/>
            <person name="Katoh M."/>
            <person name="Kawasawa Y."/>
            <person name="Kelso J."/>
            <person name="Kitamura H."/>
            <person name="Kitano H."/>
            <person name="Kollias G."/>
            <person name="Krishnan S.P."/>
            <person name="Kruger A."/>
            <person name="Kummerfeld S.K."/>
            <person name="Kurochkin I.V."/>
            <person name="Lareau L.F."/>
            <person name="Lazarevic D."/>
            <person name="Lipovich L."/>
            <person name="Liu J."/>
            <person name="Liuni S."/>
            <person name="McWilliam S."/>
            <person name="Madan Babu M."/>
            <person name="Madera M."/>
            <person name="Marchionni L."/>
            <person name="Matsuda H."/>
            <person name="Matsuzawa S."/>
            <person name="Miki H."/>
            <person name="Mignone F."/>
            <person name="Miyake S."/>
            <person name="Morris K."/>
            <person name="Mottagui-Tabar S."/>
            <person name="Mulder N."/>
            <person name="Nakano N."/>
            <person name="Nakauchi H."/>
            <person name="Ng P."/>
            <person name="Nilsson R."/>
            <person name="Nishiguchi S."/>
            <person name="Nishikawa S."/>
            <person name="Nori F."/>
            <person name="Ohara O."/>
            <person name="Okazaki Y."/>
            <person name="Orlando V."/>
            <person name="Pang K.C."/>
            <person name="Pavan W.J."/>
            <person name="Pavesi G."/>
            <person name="Pesole G."/>
            <person name="Petrovsky N."/>
            <person name="Piazza S."/>
            <person name="Reed J."/>
            <person name="Reid J.F."/>
            <person name="Ring B.Z."/>
            <person name="Ringwald M."/>
            <person name="Rost B."/>
            <person name="Ruan Y."/>
            <person name="Salzberg S.L."/>
            <person name="Sandelin A."/>
            <person name="Schneider C."/>
            <person name="Schoenbach C."/>
            <person name="Sekiguchi K."/>
            <person name="Semple C.A."/>
            <person name="Seno S."/>
            <person name="Sessa L."/>
            <person name="Sheng Y."/>
            <person name="Shibata Y."/>
            <person name="Shimada H."/>
            <person name="Shimada K."/>
            <person name="Silva D."/>
            <person name="Sinclair B."/>
            <person name="Sperling S."/>
            <person name="Stupka E."/>
            <person name="Sugiura K."/>
            <person name="Sultana R."/>
            <person name="Takenaka Y."/>
            <person name="Taki K."/>
            <person name="Tammoja K."/>
            <person name="Tan S.L."/>
            <person name="Tang S."/>
            <person name="Taylor M.S."/>
            <person name="Tegner J."/>
            <person name="Teichmann S.A."/>
            <person name="Ueda H.R."/>
            <person name="van Nimwegen E."/>
            <person name="Verardo R."/>
            <person name="Wei C.L."/>
            <person name="Yagi K."/>
            <person name="Yamanishi H."/>
            <person name="Zabarovsky E."/>
            <person name="Zhu S."/>
            <person name="Zimmer A."/>
            <person name="Hide W."/>
            <person name="Bult C."/>
            <person name="Grimmond S.M."/>
            <person name="Teasdale R.D."/>
            <person name="Liu E.T."/>
            <person name="Brusic V."/>
            <person name="Quackenbush J."/>
            <person name="Wahlestedt C."/>
            <person name="Mattick J.S."/>
            <person name="Hume D.A."/>
            <person name="Kai C."/>
            <person name="Sasaki D."/>
            <person name="Tomaru Y."/>
            <person name="Fukuda S."/>
            <person name="Kanamori-Katayama M."/>
            <person name="Suzuki M."/>
            <person name="Aoki J."/>
            <person name="Arakawa T."/>
            <person name="Iida J."/>
            <person name="Imamura K."/>
            <person name="Itoh M."/>
            <person name="Kato T."/>
            <person name="Kawaji H."/>
            <person name="Kawagashira N."/>
            <person name="Kawashima T."/>
            <person name="Kojima M."/>
            <person name="Kondo S."/>
            <person name="Konno H."/>
            <person name="Nakano K."/>
            <person name="Ninomiya N."/>
            <person name="Nishio T."/>
            <person name="Okada M."/>
            <person name="Plessy C."/>
            <person name="Shibata K."/>
            <person name="Shiraki T."/>
            <person name="Suzuki S."/>
            <person name="Tagami M."/>
            <person name="Waki K."/>
            <person name="Watahiki A."/>
            <person name="Okamura-Oho Y."/>
            <person name="Suzuki H."/>
            <person name="Kawai J."/>
            <person name="Hayashizaki Y."/>
        </authorList>
    </citation>
    <scope>NUCLEOTIDE SEQUENCE [LARGE SCALE MRNA]</scope>
    <source>
        <strain>C57BL/6J</strain>
        <tissue>Lung</tissue>
        <tissue>Spinal ganglion</tissue>
    </source>
</reference>
<reference key="3">
    <citation type="journal article" date="2004" name="Genome Res.">
        <title>The status, quality, and expansion of the NIH full-length cDNA project: the Mammalian Gene Collection (MGC).</title>
        <authorList>
            <consortium name="The MGC Project Team"/>
        </authorList>
    </citation>
    <scope>NUCLEOTIDE SEQUENCE [LARGE SCALE MRNA]</scope>
    <source>
        <strain>FVB/N</strain>
        <tissue>Mammary tumor</tissue>
    </source>
</reference>
<reference key="4">
    <citation type="journal article" date="2002" name="J. Biol. Chem.">
        <title>A novel zinc-regulated human zinc transporter, hZTL1, is localized to the enterocyte apical membrane.</title>
        <authorList>
            <person name="Cragg R.A."/>
            <person name="Christie G.R."/>
            <person name="Phillips S.R."/>
            <person name="Russi R.M."/>
            <person name="Kuery S."/>
            <person name="Mathers J.C."/>
            <person name="Taylor P.M."/>
            <person name="Ford D."/>
        </authorList>
    </citation>
    <scope>NUCLEOTIDE SEQUENCE [MRNA] OF 120-666</scope>
    <scope>TISSUE SPECIFICITY</scope>
</reference>
<reference key="5">
    <citation type="journal article" date="2002" name="Hum. Mol. Genet.">
        <title>Osteopenia and male-specific sudden cardiac death in mice lacking a zinc transporter gene, Znt5.</title>
        <authorList>
            <person name="Inoue K."/>
            <person name="Matsuda K."/>
            <person name="Itoh M."/>
            <person name="Kawaguchi H."/>
            <person name="Tomoike H."/>
            <person name="Aoyagi T."/>
            <person name="Nagai R."/>
            <person name="Hori M."/>
            <person name="Nakamura Y."/>
            <person name="Tanaka T."/>
        </authorList>
    </citation>
    <scope>DISRUPTION PHENOTYPE</scope>
</reference>
<reference key="6">
    <citation type="journal article" date="2010" name="Cell">
        <title>A tissue-specific atlas of mouse protein phosphorylation and expression.</title>
        <authorList>
            <person name="Huttlin E.L."/>
            <person name="Jedrychowski M.P."/>
            <person name="Elias J.E."/>
            <person name="Goswami T."/>
            <person name="Rad R."/>
            <person name="Beausoleil S.A."/>
            <person name="Villen J."/>
            <person name="Haas W."/>
            <person name="Sowa M.E."/>
            <person name="Gygi S.P."/>
        </authorList>
    </citation>
    <scope>IDENTIFICATION BY MASS SPECTROMETRY [LARGE SCALE ANALYSIS]</scope>
    <source>
        <tissue>Pancreas</tissue>
    </source>
</reference>
<name>ZNT5_MOUSE</name>
<accession>Q8R4H9</accession>
<accession>Q8BQA0</accession>
<accession>Q8K315</accession>
<comment type="function">
    <text evidence="2">Together with SLC30A6 forms a functional proton-coupled zinc ion antiporter mediating zinc entry into the lumen of organelles along the secretory pathway. By contributing to zinc ion homeostasis within the early secretory pathway, regulates the activation and folding of enzymes like alkaline phosphatases and enzymes involved in phosphatidylinositol glycan anchor biosynthesis. Through the transport of zinc into secretory granules of pancreatic beta-cells, plays an important role in the storage and secretion of insulin.</text>
</comment>
<comment type="catalytic activity">
    <reaction evidence="2">
        <text>Zn(2+)(in) + 2 H(+)(out) = Zn(2+)(out) + 2 H(+)(in)</text>
        <dbReference type="Rhea" id="RHEA:72627"/>
        <dbReference type="ChEBI" id="CHEBI:15378"/>
        <dbReference type="ChEBI" id="CHEBI:29105"/>
    </reaction>
</comment>
<comment type="subunit">
    <text evidence="2">Heterodimer with SLC30A6/ZNT6; form a functional zinc ion transmembrane transporter.</text>
</comment>
<comment type="subcellular location">
    <subcellularLocation>
        <location evidence="2">Golgi apparatus</location>
        <location evidence="2">Golgi stack membrane</location>
        <topology evidence="3">Multi-pass membrane protein</topology>
    </subcellularLocation>
    <subcellularLocation>
        <location evidence="2">Cytoplasmic vesicle</location>
        <location evidence="2">COPII-coated vesicle membrane</location>
        <topology evidence="3">Multi-pass membrane protein</topology>
    </subcellularLocation>
    <subcellularLocation>
        <location evidence="2">Cytoplasmic vesicle</location>
        <location evidence="2">Secretory vesicle membrane</location>
        <topology evidence="3">Multi-pass membrane protein</topology>
    </subcellularLocation>
    <subcellularLocation>
        <location evidence="2">Golgi apparatus</location>
        <location evidence="2">trans-Golgi network membrane</location>
        <topology evidence="3">Multi-pass membrane protein</topology>
    </subcellularLocation>
    <text evidence="2">Enriched in early compartments of the secretory pathway including COPII-coated vesicles and the Golgi cis cisterna.</text>
</comment>
<comment type="tissue specificity">
    <text evidence="5">Ubiquitously expressed.</text>
</comment>
<comment type="PTM">
    <text evidence="2">Could homodimerize through the formation of dityrosine bonds upon oxidative stress.</text>
</comment>
<comment type="disruption phenotype">
    <text evidence="6">Homozygous knockout mice are viable and fertile (PubMed:12095919). However, they grow poorly and display lean phenotype, muscle weakness, osteopenia due to impairment of osteoblast maturation to osteocyte and male-specific sudden cardiac death associated with bradyarrhythmia (PubMed:12095919).</text>
</comment>
<comment type="similarity">
    <text evidence="9">Belongs to the cation diffusion facilitator (CDF) transporter (TC 2.A.4) family. SLC30A subfamily.</text>
</comment>
<comment type="sequence caution" evidence="9">
    <conflict type="erroneous initiation">
        <sequence resource="EMBL-CDS" id="BAC34549"/>
    </conflict>
    <text>Truncated N-terminus.</text>
</comment>
<gene>
    <name evidence="10" type="primary">Slc30a5</name>
    <name evidence="8" type="synonym">Znt5</name>
</gene>
<feature type="chain" id="PRO_0000314294" description="Proton-coupled zinc antiporter SLC30A5">
    <location>
        <begin position="1"/>
        <end position="761"/>
    </location>
</feature>
<feature type="topological domain" description="Cytoplasmic" evidence="9">
    <location>
        <begin position="1"/>
        <end position="29"/>
    </location>
</feature>
<feature type="transmembrane region" description="Helical" evidence="3">
    <location>
        <begin position="30"/>
        <end position="46"/>
    </location>
</feature>
<feature type="topological domain" description="Lumenal" evidence="9">
    <location>
        <begin position="47"/>
        <end position="54"/>
    </location>
</feature>
<feature type="transmembrane region" description="Helical" evidence="3">
    <location>
        <begin position="55"/>
        <end position="75"/>
    </location>
</feature>
<feature type="topological domain" description="Cytoplasmic" evidence="9">
    <location>
        <begin position="76"/>
        <end position="96"/>
    </location>
</feature>
<feature type="transmembrane region" description="Helical" evidence="3">
    <location>
        <begin position="97"/>
        <end position="117"/>
    </location>
</feature>
<feature type="topological domain" description="Lumenal" evidence="9">
    <location>
        <position position="118"/>
    </location>
</feature>
<feature type="transmembrane region" description="Helical" evidence="3">
    <location>
        <begin position="119"/>
        <end position="139"/>
    </location>
</feature>
<feature type="topological domain" description="Cytoplasmic" evidence="9">
    <location>
        <begin position="140"/>
        <end position="150"/>
    </location>
</feature>
<feature type="transmembrane region" description="Helical" evidence="3">
    <location>
        <begin position="151"/>
        <end position="171"/>
    </location>
</feature>
<feature type="topological domain" description="Lumenal" evidence="9">
    <location>
        <begin position="172"/>
        <end position="191"/>
    </location>
</feature>
<feature type="transmembrane region" description="Helical" evidence="3">
    <location>
        <begin position="192"/>
        <end position="212"/>
    </location>
</feature>
<feature type="topological domain" description="Cytoplasmic" evidence="9">
    <location>
        <begin position="213"/>
        <end position="236"/>
    </location>
</feature>
<feature type="transmembrane region" description="Helical" evidence="3">
    <location>
        <begin position="237"/>
        <end position="257"/>
    </location>
</feature>
<feature type="topological domain" description="Lumenal" evidence="9">
    <location>
        <begin position="258"/>
        <end position="264"/>
    </location>
</feature>
<feature type="transmembrane region" description="Helical" evidence="3">
    <location>
        <begin position="265"/>
        <end position="285"/>
    </location>
</feature>
<feature type="topological domain" description="Cytoplasmic" evidence="9">
    <location>
        <begin position="286"/>
        <end position="301"/>
    </location>
</feature>
<feature type="transmembrane region" description="Helical" evidence="3">
    <location>
        <begin position="302"/>
        <end position="322"/>
    </location>
</feature>
<feature type="topological domain" description="Lumenal" evidence="9">
    <location>
        <begin position="323"/>
        <end position="340"/>
    </location>
</feature>
<feature type="transmembrane region" description="Helical" evidence="3">
    <location>
        <begin position="341"/>
        <end position="361"/>
    </location>
</feature>
<feature type="topological domain" description="Cytoplasmic" evidence="9">
    <location>
        <begin position="362"/>
        <end position="416"/>
    </location>
</feature>
<feature type="transmembrane region" description="Helical" evidence="3">
    <location>
        <begin position="417"/>
        <end position="437"/>
    </location>
</feature>
<feature type="topological domain" description="Lumenal" evidence="9">
    <location>
        <begin position="438"/>
        <end position="446"/>
    </location>
</feature>
<feature type="transmembrane region" description="Helical" evidence="3">
    <location>
        <begin position="447"/>
        <end position="467"/>
    </location>
</feature>
<feature type="topological domain" description="Cytoplasmic" evidence="9">
    <location>
        <begin position="468"/>
        <end position="481"/>
    </location>
</feature>
<feature type="transmembrane region" description="Helical" evidence="3">
    <location>
        <begin position="482"/>
        <end position="502"/>
    </location>
</feature>
<feature type="topological domain" description="Lumenal" evidence="9">
    <location>
        <begin position="503"/>
        <end position="518"/>
    </location>
</feature>
<feature type="transmembrane region" description="Helical" evidence="3">
    <location>
        <begin position="519"/>
        <end position="539"/>
    </location>
</feature>
<feature type="topological domain" description="Cytoplasmic" evidence="9">
    <location>
        <begin position="540"/>
        <end position="588"/>
    </location>
</feature>
<feature type="transmembrane region" description="Helical" evidence="3">
    <location>
        <begin position="589"/>
        <end position="609"/>
    </location>
</feature>
<feature type="topological domain" description="Lumenal" evidence="9">
    <location>
        <begin position="610"/>
        <end position="613"/>
    </location>
</feature>
<feature type="transmembrane region" description="Helical" evidence="3">
    <location>
        <begin position="614"/>
        <end position="634"/>
    </location>
</feature>
<feature type="topological domain" description="Cytoplasmic" evidence="9">
    <location>
        <begin position="635"/>
        <end position="761"/>
    </location>
</feature>
<feature type="region of interest" description="Mediates homodimerization with SLC30A6" evidence="2">
    <location>
        <begin position="418"/>
        <end position="636"/>
    </location>
</feature>
<feature type="region of interest" description="His-rich loop; required for zinc transport" evidence="2">
    <location>
        <begin position="540"/>
        <end position="574"/>
    </location>
</feature>
<feature type="region of interest" description="Disordered" evidence="4">
    <location>
        <begin position="549"/>
        <end position="576"/>
    </location>
</feature>
<feature type="binding site" evidence="1">
    <location>
        <position position="449"/>
    </location>
    <ligand>
        <name>Zn(2+)</name>
        <dbReference type="ChEBI" id="CHEBI:29105"/>
        <note>transported zinc</note>
    </ligand>
</feature>
<feature type="binding site" evidence="1">
    <location>
        <position position="453"/>
    </location>
    <ligand>
        <name>Zn(2+)</name>
        <dbReference type="ChEBI" id="CHEBI:29105"/>
        <note>transported zinc</note>
    </ligand>
</feature>
<feature type="binding site" evidence="1">
    <location>
        <position position="591"/>
    </location>
    <ligand>
        <name>Zn(2+)</name>
        <dbReference type="ChEBI" id="CHEBI:29105"/>
        <note>transported zinc</note>
    </ligand>
</feature>
<feature type="binding site" evidence="1">
    <location>
        <position position="595"/>
    </location>
    <ligand>
        <name>Zn(2+)</name>
        <dbReference type="ChEBI" id="CHEBI:29105"/>
        <note>transported zinc</note>
    </ligand>
</feature>
<feature type="modified residue" description="N-acetylmethionine" evidence="2">
    <location>
        <position position="1"/>
    </location>
</feature>
<protein>
    <recommendedName>
        <fullName evidence="9">Proton-coupled zinc antiporter SLC30A5</fullName>
    </recommendedName>
    <alternativeName>
        <fullName evidence="10">Solute carrier family 30 member 5</fullName>
    </alternativeName>
    <alternativeName>
        <fullName evidence="7">Zinc transporter 5</fullName>
        <shortName evidence="7">ZnT-5</shortName>
    </alternativeName>
</protein>